<comment type="function">
    <text evidence="2">Under iron limitation, RipA negatively controls the expression of the acn (aconitase), catA (catechol 1,2 dioxygenase), leuCD (isopropylmalate dehydratase), narKGHJI (nitrite/nitrate transporter and nitrate reductase), sdhCAB (succinate dehydrogenase), pta (phosphotransacetylase) and katA (catalase) genes. Binds to the consensus sequence in the promoter region.</text>
</comment>
<comment type="induction">
    <text evidence="2">Repressed by DtxR under iron excess.</text>
</comment>
<comment type="disruption phenotype">
    <text evidence="2">Under iron limitation, the ripA deletion mutant shows a 2-fold higher aconitase activity and a higher mRNA level for the acn, catA, leuCD, narKGHJI, sdhCAB and pta genes.</text>
</comment>
<sequence length="331" mass="36045">MSSASLLWCHSGVSTVRFGERIFTLVAGDLLFAPEEAQVADDSQGLVLNIRFETLNIMGPARRIHLGHVWNDRLTFEYSRSLFGKETLSPDIARLFTDRVPTPPLPAPRKARAVAQVLVSNPADQTSLEEFAEIQGVSARTLQRQFLKSTGYSFSEWRAAQRVCVAASLLAHDFSISVVANLVGFAATSSLTRAFRRHTGATPSTFTTGQIGMGSAGHPPRIPATTTFAEAHQDQQLWIYSGTATVTTPGYCRFMGQGDMVTIPAGTQTRIDVAAGSIAFPVPVGLDEWGMDLTRVVAVNNQQPKPLTILEQSEWSKLSEELLNTPVPVQM</sequence>
<proteinExistence type="evidence at transcript level"/>
<protein>
    <recommendedName>
        <fullName evidence="3">HTH-type transcriptional regulator RipA</fullName>
    </recommendedName>
    <alternativeName>
        <fullName evidence="3">AraC-type regulator RipA</fullName>
    </alternativeName>
    <alternativeName>
        <fullName evidence="3">Repressor of iron proteins A</fullName>
        <shortName evidence="3">RIPA</shortName>
    </alternativeName>
</protein>
<name>RIPA_CORGL</name>
<accession>Q8NRR3</accession>
<accession>Q5QHF9</accession>
<accession>Q6M6H3</accession>
<reference key="1">
    <citation type="journal article" date="2003" name="Appl. Microbiol. Biotechnol.">
        <title>The Corynebacterium glutamicum genome: features and impacts on biotechnological processes.</title>
        <authorList>
            <person name="Ikeda M."/>
            <person name="Nakagawa S."/>
        </authorList>
    </citation>
    <scope>NUCLEOTIDE SEQUENCE [LARGE SCALE GENOMIC DNA]</scope>
    <source>
        <strain>ATCC 13032 / DSM 20300 / JCM 1318 / BCRC 11384 / CCUG 27702 / LMG 3730 / NBRC 12168 / NCIMB 10025 / NRRL B-2784 / 534</strain>
    </source>
</reference>
<reference key="2">
    <citation type="journal article" date="2003" name="J. Biotechnol.">
        <title>The complete Corynebacterium glutamicum ATCC 13032 genome sequence and its impact on the production of L-aspartate-derived amino acids and vitamins.</title>
        <authorList>
            <person name="Kalinowski J."/>
            <person name="Bathe B."/>
            <person name="Bartels D."/>
            <person name="Bischoff N."/>
            <person name="Bott M."/>
            <person name="Burkovski A."/>
            <person name="Dusch N."/>
            <person name="Eggeling L."/>
            <person name="Eikmanns B.J."/>
            <person name="Gaigalat L."/>
            <person name="Goesmann A."/>
            <person name="Hartmann M."/>
            <person name="Huthmacher K."/>
            <person name="Kraemer R."/>
            <person name="Linke B."/>
            <person name="McHardy A.C."/>
            <person name="Meyer F."/>
            <person name="Moeckel B."/>
            <person name="Pfefferle W."/>
            <person name="Puehler A."/>
            <person name="Rey D.A."/>
            <person name="Rueckert C."/>
            <person name="Rupp O."/>
            <person name="Sahm H."/>
            <person name="Wendisch V.F."/>
            <person name="Wiegraebe I."/>
            <person name="Tauch A."/>
        </authorList>
    </citation>
    <scope>NUCLEOTIDE SEQUENCE [LARGE SCALE GENOMIC DNA]</scope>
    <source>
        <strain>ATCC 13032 / DSM 20300 / JCM 1318 / BCRC 11384 / CCUG 27702 / LMG 3730 / NBRC 12168 / NCIMB 10025 / NRRL B-2784 / 534</strain>
    </source>
</reference>
<reference key="3">
    <citation type="submission" date="2003-11" db="EMBL/GenBank/DDBJ databases">
        <title>Corynebacterium glutamicum isolate promoter functional region.</title>
        <authorList>
            <person name="Park S.-D."/>
            <person name="Park I.-H."/>
            <person name="Lee S.-N."/>
            <person name="Lee H.-S."/>
        </authorList>
    </citation>
    <scope>NUCLEOTIDE SEQUENCE [GENOMIC DNA] OF 1-72</scope>
    <source>
        <strain>ATCC 13059 / LMG 3658 / NCIB 10332 / AS019 / 613</strain>
    </source>
</reference>
<reference key="4">
    <citation type="journal article" date="2005" name="J. Biol. Chem.">
        <title>The AraC-type regulator RipA represses aconitase and other iron proteins from Corynebacterium under iron limitation and is itself repressed by DtxR.</title>
        <authorList>
            <person name="Wennerhold J."/>
            <person name="Krug A."/>
            <person name="Bott M."/>
        </authorList>
    </citation>
    <scope>FUNCTION</scope>
    <scope>DISRUPTION PHENOTYPE</scope>
    <scope>INDUCTION</scope>
    <source>
        <strain>ATCC 13032 / DSM 20300 / JCM 1318 / BCRC 11384 / CCUG 27702 / LMG 3730 / NBRC 12168 / NCIMB 10025 / NRRL B-2784 / 534</strain>
    </source>
</reference>
<organism>
    <name type="scientific">Corynebacterium glutamicum (strain ATCC 13032 / DSM 20300 / JCM 1318 / BCRC 11384 / CCUG 27702 / LMG 3730 / NBRC 12168 / NCIMB 10025 / NRRL B-2784 / 534)</name>
    <dbReference type="NCBI Taxonomy" id="196627"/>
    <lineage>
        <taxon>Bacteria</taxon>
        <taxon>Bacillati</taxon>
        <taxon>Actinomycetota</taxon>
        <taxon>Actinomycetes</taxon>
        <taxon>Mycobacteriales</taxon>
        <taxon>Corynebacteriaceae</taxon>
        <taxon>Corynebacterium</taxon>
    </lineage>
</organism>
<gene>
    <name evidence="3" type="primary">ripA</name>
    <name type="ordered locus">Cgl0982</name>
    <name type="ordered locus">cg1120</name>
</gene>
<keyword id="KW-0238">DNA-binding</keyword>
<keyword id="KW-1185">Reference proteome</keyword>
<keyword id="KW-0678">Repressor</keyword>
<keyword id="KW-0804">Transcription</keyword>
<keyword id="KW-0805">Transcription regulation</keyword>
<dbReference type="EMBL" id="BA000036">
    <property type="protein sequence ID" value="BAB98375.1"/>
    <property type="molecule type" value="Genomic_DNA"/>
</dbReference>
<dbReference type="EMBL" id="BX927150">
    <property type="protein sequence ID" value="CAF19689.1"/>
    <property type="molecule type" value="Genomic_DNA"/>
</dbReference>
<dbReference type="EMBL" id="AY513595">
    <property type="protein sequence ID" value="AAS92713.1"/>
    <property type="molecule type" value="Genomic_DNA"/>
</dbReference>
<dbReference type="RefSeq" id="NP_600210.1">
    <property type="nucleotide sequence ID" value="NC_003450.3"/>
</dbReference>
<dbReference type="RefSeq" id="WP_011014026.1">
    <property type="nucleotide sequence ID" value="NC_006958.1"/>
</dbReference>
<dbReference type="SMR" id="Q8NRR3"/>
<dbReference type="STRING" id="196627.cg1120"/>
<dbReference type="DNASU" id="1018972"/>
<dbReference type="KEGG" id="cgb:cg1120"/>
<dbReference type="KEGG" id="cgl:Cgl0982"/>
<dbReference type="PATRIC" id="fig|196627.13.peg.966"/>
<dbReference type="eggNOG" id="COG2207">
    <property type="taxonomic scope" value="Bacteria"/>
</dbReference>
<dbReference type="HOGENOM" id="CLU_810658_0_0_11"/>
<dbReference type="OrthoDB" id="2039152at2"/>
<dbReference type="BioCyc" id="CORYNE:G18NG-10554-MONOMER"/>
<dbReference type="Proteomes" id="UP000000582">
    <property type="component" value="Chromosome"/>
</dbReference>
<dbReference type="Proteomes" id="UP000001009">
    <property type="component" value="Chromosome"/>
</dbReference>
<dbReference type="GO" id="GO:0003700">
    <property type="term" value="F:DNA-binding transcription factor activity"/>
    <property type="evidence" value="ECO:0007669"/>
    <property type="project" value="InterPro"/>
</dbReference>
<dbReference type="GO" id="GO:0043565">
    <property type="term" value="F:sequence-specific DNA binding"/>
    <property type="evidence" value="ECO:0007669"/>
    <property type="project" value="InterPro"/>
</dbReference>
<dbReference type="GO" id="GO:0006355">
    <property type="term" value="P:regulation of DNA-templated transcription"/>
    <property type="evidence" value="ECO:0000315"/>
    <property type="project" value="UniProtKB"/>
</dbReference>
<dbReference type="FunFam" id="1.10.10.60:FF:000132">
    <property type="entry name" value="AraC family transcriptional regulator"/>
    <property type="match status" value="1"/>
</dbReference>
<dbReference type="Gene3D" id="1.10.10.60">
    <property type="entry name" value="Homeodomain-like"/>
    <property type="match status" value="1"/>
</dbReference>
<dbReference type="InterPro" id="IPR009057">
    <property type="entry name" value="Homeodomain-like_sf"/>
</dbReference>
<dbReference type="InterPro" id="IPR018060">
    <property type="entry name" value="HTH_AraC"/>
</dbReference>
<dbReference type="InterPro" id="IPR018062">
    <property type="entry name" value="HTH_AraC-typ_CS"/>
</dbReference>
<dbReference type="InterPro" id="IPR011051">
    <property type="entry name" value="RmlC_Cupin_sf"/>
</dbReference>
<dbReference type="PANTHER" id="PTHR11019">
    <property type="entry name" value="HTH-TYPE TRANSCRIPTIONAL REGULATOR NIMR"/>
    <property type="match status" value="1"/>
</dbReference>
<dbReference type="PANTHER" id="PTHR11019:SF159">
    <property type="entry name" value="TRANSCRIPTIONAL REGULATOR-RELATED"/>
    <property type="match status" value="1"/>
</dbReference>
<dbReference type="Pfam" id="PF12833">
    <property type="entry name" value="HTH_18"/>
    <property type="match status" value="1"/>
</dbReference>
<dbReference type="SMART" id="SM00342">
    <property type="entry name" value="HTH_ARAC"/>
    <property type="match status" value="1"/>
</dbReference>
<dbReference type="SUPFAM" id="SSF46689">
    <property type="entry name" value="Homeodomain-like"/>
    <property type="match status" value="2"/>
</dbReference>
<dbReference type="SUPFAM" id="SSF51182">
    <property type="entry name" value="RmlC-like cupins"/>
    <property type="match status" value="1"/>
</dbReference>
<dbReference type="PROSITE" id="PS00041">
    <property type="entry name" value="HTH_ARAC_FAMILY_1"/>
    <property type="match status" value="1"/>
</dbReference>
<dbReference type="PROSITE" id="PS01124">
    <property type="entry name" value="HTH_ARAC_FAMILY_2"/>
    <property type="match status" value="1"/>
</dbReference>
<feature type="chain" id="PRO_0000223239" description="HTH-type transcriptional regulator RipA">
    <location>
        <begin position="1"/>
        <end position="331"/>
    </location>
</feature>
<feature type="domain" description="HTH araC/xylS-type" evidence="1">
    <location>
        <begin position="112"/>
        <end position="209"/>
    </location>
</feature>
<feature type="DNA-binding region" description="H-T-H motif" evidence="1">
    <location>
        <begin position="129"/>
        <end position="150"/>
    </location>
</feature>
<feature type="DNA-binding region" description="H-T-H motif" evidence="1">
    <location>
        <begin position="176"/>
        <end position="199"/>
    </location>
</feature>
<feature type="sequence conflict" description="In Ref. 3; AAS92713." evidence="4" ref="3">
    <original>VRFGERIFTLVAG</original>
    <variation>SSVLAREFSLSSQA</variation>
    <location>
        <begin position="16"/>
        <end position="28"/>
    </location>
</feature>
<evidence type="ECO:0000255" key="1">
    <source>
        <dbReference type="PROSITE-ProRule" id="PRU00593"/>
    </source>
</evidence>
<evidence type="ECO:0000269" key="2">
    <source>
    </source>
</evidence>
<evidence type="ECO:0000303" key="3">
    <source>
    </source>
</evidence>
<evidence type="ECO:0000305" key="4"/>